<dbReference type="EC" id="3.4.23.-" evidence="7"/>
<dbReference type="EC" id="2.7.7.49" evidence="8"/>
<dbReference type="EC" id="2.7.7.7" evidence="8"/>
<dbReference type="EC" id="3.1.26.4" evidence="9"/>
<dbReference type="EC" id="2.7.7.-" evidence="19"/>
<dbReference type="EC" id="3.1.-.-" evidence="19"/>
<dbReference type="EMBL" id="M37980">
    <property type="protein sequence ID" value="AAA91269.1"/>
    <property type="molecule type" value="Genomic_RNA"/>
</dbReference>
<dbReference type="PIR" id="S35429">
    <property type="entry name" value="S35429"/>
</dbReference>
<dbReference type="SMR" id="Q04095"/>
<dbReference type="BindingDB" id="Q04095"/>
<dbReference type="DrugBank" id="DB02413">
    <property type="generic name" value="Hydroxyethylcysteine"/>
</dbReference>
<dbReference type="KEGG" id="vg:1491910"/>
<dbReference type="Proteomes" id="UP000002238">
    <property type="component" value="Genome"/>
</dbReference>
<dbReference type="GO" id="GO:0044423">
    <property type="term" value="C:virion component"/>
    <property type="evidence" value="ECO:0007669"/>
    <property type="project" value="UniProtKB-KW"/>
</dbReference>
<dbReference type="GO" id="GO:0004190">
    <property type="term" value="F:aspartic-type endopeptidase activity"/>
    <property type="evidence" value="ECO:0007669"/>
    <property type="project" value="UniProtKB-KW"/>
</dbReference>
<dbReference type="GO" id="GO:0003677">
    <property type="term" value="F:DNA binding"/>
    <property type="evidence" value="ECO:0007669"/>
    <property type="project" value="UniProtKB-KW"/>
</dbReference>
<dbReference type="GO" id="GO:0003887">
    <property type="term" value="F:DNA-directed DNA polymerase activity"/>
    <property type="evidence" value="ECO:0007669"/>
    <property type="project" value="UniProtKB-KW"/>
</dbReference>
<dbReference type="GO" id="GO:0035613">
    <property type="term" value="F:RNA stem-loop binding"/>
    <property type="evidence" value="ECO:0007669"/>
    <property type="project" value="TreeGrafter"/>
</dbReference>
<dbReference type="GO" id="GO:0003964">
    <property type="term" value="F:RNA-directed DNA polymerase activity"/>
    <property type="evidence" value="ECO:0007669"/>
    <property type="project" value="UniProtKB-KW"/>
</dbReference>
<dbReference type="GO" id="GO:0004523">
    <property type="term" value="F:RNA-DNA hybrid ribonuclease activity"/>
    <property type="evidence" value="ECO:0007669"/>
    <property type="project" value="UniProtKB-EC"/>
</dbReference>
<dbReference type="GO" id="GO:0008270">
    <property type="term" value="F:zinc ion binding"/>
    <property type="evidence" value="ECO:0007669"/>
    <property type="project" value="UniProtKB-KW"/>
</dbReference>
<dbReference type="GO" id="GO:0015074">
    <property type="term" value="P:DNA integration"/>
    <property type="evidence" value="ECO:0007669"/>
    <property type="project" value="UniProtKB-KW"/>
</dbReference>
<dbReference type="GO" id="GO:0006310">
    <property type="term" value="P:DNA recombination"/>
    <property type="evidence" value="ECO:0007669"/>
    <property type="project" value="UniProtKB-KW"/>
</dbReference>
<dbReference type="GO" id="GO:0075713">
    <property type="term" value="P:establishment of integrated proviral latency"/>
    <property type="evidence" value="ECO:0007669"/>
    <property type="project" value="UniProtKB-KW"/>
</dbReference>
<dbReference type="GO" id="GO:0006508">
    <property type="term" value="P:proteolysis"/>
    <property type="evidence" value="ECO:0007669"/>
    <property type="project" value="UniProtKB-KW"/>
</dbReference>
<dbReference type="GO" id="GO:0046718">
    <property type="term" value="P:symbiont entry into host cell"/>
    <property type="evidence" value="ECO:0007669"/>
    <property type="project" value="UniProtKB-KW"/>
</dbReference>
<dbReference type="GO" id="GO:0044826">
    <property type="term" value="P:viral genome integration into host DNA"/>
    <property type="evidence" value="ECO:0007669"/>
    <property type="project" value="UniProtKB-KW"/>
</dbReference>
<dbReference type="GO" id="GO:0075523">
    <property type="term" value="P:viral translational frameshifting"/>
    <property type="evidence" value="ECO:0007669"/>
    <property type="project" value="UniProtKB-KW"/>
</dbReference>
<dbReference type="CDD" id="cd05482">
    <property type="entry name" value="HIV_retropepsin_like"/>
    <property type="match status" value="1"/>
</dbReference>
<dbReference type="CDD" id="cd01645">
    <property type="entry name" value="RT_Rtv"/>
    <property type="match status" value="1"/>
</dbReference>
<dbReference type="FunFam" id="1.10.375.10:FF:000003">
    <property type="entry name" value="Gag polyprotein"/>
    <property type="match status" value="1"/>
</dbReference>
<dbReference type="FunFam" id="1.10.10.200:FF:000010">
    <property type="entry name" value="Gag-Pol polyprotein"/>
    <property type="match status" value="1"/>
</dbReference>
<dbReference type="FunFam" id="3.30.420.10:FF:000184">
    <property type="entry name" value="Gag-Pol polyprotein"/>
    <property type="match status" value="1"/>
</dbReference>
<dbReference type="Gene3D" id="1.10.10.200">
    <property type="match status" value="1"/>
</dbReference>
<dbReference type="Gene3D" id="1.10.1200.30">
    <property type="match status" value="1"/>
</dbReference>
<dbReference type="Gene3D" id="3.30.70.270">
    <property type="match status" value="2"/>
</dbReference>
<dbReference type="Gene3D" id="2.40.70.10">
    <property type="entry name" value="Acid Proteases"/>
    <property type="match status" value="1"/>
</dbReference>
<dbReference type="Gene3D" id="3.10.10.10">
    <property type="entry name" value="HIV Type 1 Reverse Transcriptase, subunit A, domain 1"/>
    <property type="match status" value="1"/>
</dbReference>
<dbReference type="Gene3D" id="1.10.375.10">
    <property type="entry name" value="Human Immunodeficiency Virus Type 1 Capsid Protein"/>
    <property type="match status" value="1"/>
</dbReference>
<dbReference type="Gene3D" id="1.10.150.90">
    <property type="entry name" value="Immunodeficiency lentiviruses, gag gene matrix protein p17"/>
    <property type="match status" value="1"/>
</dbReference>
<dbReference type="Gene3D" id="2.30.30.10">
    <property type="entry name" value="Integrase, C-terminal domain superfamily, retroviral"/>
    <property type="match status" value="1"/>
</dbReference>
<dbReference type="Gene3D" id="3.30.420.10">
    <property type="entry name" value="Ribonuclease H-like superfamily/Ribonuclease H"/>
    <property type="match status" value="2"/>
</dbReference>
<dbReference type="Gene3D" id="4.10.60.10">
    <property type="entry name" value="Zinc finger, CCHC-type"/>
    <property type="match status" value="1"/>
</dbReference>
<dbReference type="InterPro" id="IPR001969">
    <property type="entry name" value="Aspartic_peptidase_AS"/>
</dbReference>
<dbReference type="InterPro" id="IPR043502">
    <property type="entry name" value="DNA/RNA_pol_sf"/>
</dbReference>
<dbReference type="InterPro" id="IPR004028">
    <property type="entry name" value="Gag_M"/>
</dbReference>
<dbReference type="InterPro" id="IPR017856">
    <property type="entry name" value="Integrase-like_N"/>
</dbReference>
<dbReference type="InterPro" id="IPR036862">
    <property type="entry name" value="Integrase_C_dom_sf_retrovir"/>
</dbReference>
<dbReference type="InterPro" id="IPR001037">
    <property type="entry name" value="Integrase_C_retrovir"/>
</dbReference>
<dbReference type="InterPro" id="IPR001584">
    <property type="entry name" value="Integrase_cat-core"/>
</dbReference>
<dbReference type="InterPro" id="IPR003308">
    <property type="entry name" value="Integrase_Zn-bd_dom_N"/>
</dbReference>
<dbReference type="InterPro" id="IPR012344">
    <property type="entry name" value="Matrix_HIV/RSV_N"/>
</dbReference>
<dbReference type="InterPro" id="IPR001995">
    <property type="entry name" value="Peptidase_A2_cat"/>
</dbReference>
<dbReference type="InterPro" id="IPR021109">
    <property type="entry name" value="Peptidase_aspartic_dom_sf"/>
</dbReference>
<dbReference type="InterPro" id="IPR034170">
    <property type="entry name" value="Retropepsin-like_cat_dom"/>
</dbReference>
<dbReference type="InterPro" id="IPR018061">
    <property type="entry name" value="Retropepsins"/>
</dbReference>
<dbReference type="InterPro" id="IPR008916">
    <property type="entry name" value="Retrov_capsid_C"/>
</dbReference>
<dbReference type="InterPro" id="IPR008919">
    <property type="entry name" value="Retrov_capsid_N"/>
</dbReference>
<dbReference type="InterPro" id="IPR010999">
    <property type="entry name" value="Retrovr_matrix"/>
</dbReference>
<dbReference type="InterPro" id="IPR043128">
    <property type="entry name" value="Rev_trsase/Diguanyl_cyclase"/>
</dbReference>
<dbReference type="InterPro" id="IPR012337">
    <property type="entry name" value="RNaseH-like_sf"/>
</dbReference>
<dbReference type="InterPro" id="IPR002156">
    <property type="entry name" value="RNaseH_domain"/>
</dbReference>
<dbReference type="InterPro" id="IPR036397">
    <property type="entry name" value="RNaseH_sf"/>
</dbReference>
<dbReference type="InterPro" id="IPR000477">
    <property type="entry name" value="RT_dom"/>
</dbReference>
<dbReference type="InterPro" id="IPR010661">
    <property type="entry name" value="RVT_thumb"/>
</dbReference>
<dbReference type="InterPro" id="IPR001878">
    <property type="entry name" value="Znf_CCHC"/>
</dbReference>
<dbReference type="InterPro" id="IPR036875">
    <property type="entry name" value="Znf_CCHC_sf"/>
</dbReference>
<dbReference type="PANTHER" id="PTHR41694">
    <property type="entry name" value="ENDOGENOUS RETROVIRUS GROUP K MEMBER POL PROTEIN"/>
    <property type="match status" value="1"/>
</dbReference>
<dbReference type="PANTHER" id="PTHR41694:SF3">
    <property type="entry name" value="RNA-DIRECTED DNA POLYMERASE-RELATED"/>
    <property type="match status" value="1"/>
</dbReference>
<dbReference type="Pfam" id="PF00607">
    <property type="entry name" value="Gag_p24"/>
    <property type="match status" value="1"/>
</dbReference>
<dbReference type="Pfam" id="PF00552">
    <property type="entry name" value="IN_DBD_C"/>
    <property type="match status" value="1"/>
</dbReference>
<dbReference type="Pfam" id="PF02022">
    <property type="entry name" value="Integrase_Zn"/>
    <property type="match status" value="1"/>
</dbReference>
<dbReference type="Pfam" id="PF02813">
    <property type="entry name" value="Retro_M"/>
    <property type="match status" value="1"/>
</dbReference>
<dbReference type="Pfam" id="PF00665">
    <property type="entry name" value="rve"/>
    <property type="match status" value="1"/>
</dbReference>
<dbReference type="Pfam" id="PF00077">
    <property type="entry name" value="RVP"/>
    <property type="match status" value="1"/>
</dbReference>
<dbReference type="Pfam" id="PF00078">
    <property type="entry name" value="RVT_1"/>
    <property type="match status" value="1"/>
</dbReference>
<dbReference type="Pfam" id="PF06817">
    <property type="entry name" value="RVT_thumb"/>
    <property type="match status" value="1"/>
</dbReference>
<dbReference type="Pfam" id="PF00098">
    <property type="entry name" value="zf-CCHC"/>
    <property type="match status" value="1"/>
</dbReference>
<dbReference type="SMART" id="SM00343">
    <property type="entry name" value="ZnF_C2HC"/>
    <property type="match status" value="2"/>
</dbReference>
<dbReference type="SUPFAM" id="SSF50630">
    <property type="entry name" value="Acid proteases"/>
    <property type="match status" value="1"/>
</dbReference>
<dbReference type="SUPFAM" id="SSF50122">
    <property type="entry name" value="DNA-binding domain of retroviral integrase"/>
    <property type="match status" value="1"/>
</dbReference>
<dbReference type="SUPFAM" id="SSF56672">
    <property type="entry name" value="DNA/RNA polymerases"/>
    <property type="match status" value="1"/>
</dbReference>
<dbReference type="SUPFAM" id="SSF46919">
    <property type="entry name" value="N-terminal Zn binding domain of HIV integrase"/>
    <property type="match status" value="1"/>
</dbReference>
<dbReference type="SUPFAM" id="SSF47836">
    <property type="entry name" value="Retroviral matrix proteins"/>
    <property type="match status" value="1"/>
</dbReference>
<dbReference type="SUPFAM" id="SSF47353">
    <property type="entry name" value="Retrovirus capsid dimerization domain-like"/>
    <property type="match status" value="1"/>
</dbReference>
<dbReference type="SUPFAM" id="SSF47943">
    <property type="entry name" value="Retrovirus capsid protein, N-terminal core domain"/>
    <property type="match status" value="1"/>
</dbReference>
<dbReference type="SUPFAM" id="SSF57756">
    <property type="entry name" value="Retrovirus zinc finger-like domains"/>
    <property type="match status" value="1"/>
</dbReference>
<dbReference type="SUPFAM" id="SSF53098">
    <property type="entry name" value="Ribonuclease H-like"/>
    <property type="match status" value="2"/>
</dbReference>
<dbReference type="PROSITE" id="PS50175">
    <property type="entry name" value="ASP_PROT_RETROV"/>
    <property type="match status" value="1"/>
</dbReference>
<dbReference type="PROSITE" id="PS00141">
    <property type="entry name" value="ASP_PROTEASE"/>
    <property type="match status" value="1"/>
</dbReference>
<dbReference type="PROSITE" id="PS50994">
    <property type="entry name" value="INTEGRASE"/>
    <property type="match status" value="1"/>
</dbReference>
<dbReference type="PROSITE" id="PS51027">
    <property type="entry name" value="INTEGRASE_DBD"/>
    <property type="match status" value="1"/>
</dbReference>
<dbReference type="PROSITE" id="PS50879">
    <property type="entry name" value="RNASE_H_1"/>
    <property type="match status" value="1"/>
</dbReference>
<dbReference type="PROSITE" id="PS50878">
    <property type="entry name" value="RT_POL"/>
    <property type="match status" value="1"/>
</dbReference>
<dbReference type="PROSITE" id="PS50158">
    <property type="entry name" value="ZF_CCHC"/>
    <property type="match status" value="1"/>
</dbReference>
<dbReference type="PROSITE" id="PS50876">
    <property type="entry name" value="ZF_INTEGRASE"/>
    <property type="match status" value="1"/>
</dbReference>
<accession>Q04095</accession>
<gene>
    <name type="primary">gag-pol</name>
</gene>
<organism>
    <name type="scientific">Avian leukosis virus subgroup A (isolate RSA)</name>
    <name type="common">ALV-A RSA</name>
    <dbReference type="NCBI Taxonomy" id="363745"/>
    <lineage>
        <taxon>Viruses</taxon>
        <taxon>Riboviria</taxon>
        <taxon>Pararnavirae</taxon>
        <taxon>Artverviricota</taxon>
        <taxon>Revtraviricetes</taxon>
        <taxon>Ortervirales</taxon>
        <taxon>Retroviridae</taxon>
        <taxon>Orthoretrovirinae</taxon>
        <taxon>Alpharetrovirus</taxon>
        <taxon>Avian leukosis virus</taxon>
    </lineage>
</organism>
<proteinExistence type="inferred from homology"/>
<name>POL_ALVA</name>
<protein>
    <recommendedName>
        <fullName>Gag-Pol polyprotein</fullName>
    </recommendedName>
    <component>
        <recommendedName>
            <fullName>Matrix protein p19</fullName>
        </recommendedName>
    </component>
    <component>
        <recommendedName>
            <fullName>p2A</fullName>
        </recommendedName>
    </component>
    <component>
        <recommendedName>
            <fullName>p2B</fullName>
        </recommendedName>
    </component>
    <component>
        <recommendedName>
            <fullName>p10</fullName>
        </recommendedName>
    </component>
    <component>
        <recommendedName>
            <fullName>Capsid protein p27, alternate cleaved 1</fullName>
        </recommendedName>
    </component>
    <component>
        <recommendedName>
            <fullName>Capsid protein p27, alternate cleaved 2</fullName>
        </recommendedName>
    </component>
    <component>
        <recommendedName>
            <fullName>Spacer peptide</fullName>
            <shortName>SP</shortName>
        </recommendedName>
        <alternativeName>
            <fullName>p3</fullName>
        </alternativeName>
    </component>
    <component>
        <recommendedName>
            <fullName>Nucleocapsid protein p12</fullName>
        </recommendedName>
        <alternativeName>
            <fullName evidence="5">NCp12</fullName>
        </alternativeName>
    </component>
    <component>
        <recommendedName>
            <fullName>Protease p15</fullName>
            <ecNumber evidence="7">3.4.23.-</ecNumber>
        </recommendedName>
    </component>
    <component>
        <recommendedName>
            <fullName>Reverse transcriptase beta-subunit</fullName>
            <shortName>RT-beta</shortName>
        </recommendedName>
    </component>
    <component>
        <recommendedName>
            <fullName>Reverse transcriptase alpha-subunit</fullName>
            <shortName>RT-alpha</shortName>
            <ecNumber evidence="8">2.7.7.49</ecNumber>
            <ecNumber evidence="8">2.7.7.7</ecNumber>
            <ecNumber evidence="9">3.1.26.4</ecNumber>
        </recommendedName>
    </component>
    <component>
        <recommendedName>
            <fullName>Integrase</fullName>
            <shortName>IN</shortName>
            <ecNumber evidence="19">2.7.7.-</ecNumber>
            <ecNumber evidence="19">3.1.-.-</ecNumber>
        </recommendedName>
        <alternativeName>
            <fullName>pp32</fullName>
        </alternativeName>
    </component>
    <component>
        <recommendedName>
            <fullName>p4</fullName>
        </recommendedName>
    </component>
</protein>
<comment type="function">
    <text evidence="3">Capsid protein p27: Self-associates to form the irregular polyhedron core composed of hexamers and pentamers, that encapsulates the genomic RNA-nucleocapsid complex. Assembles as a tube in vitro. Binds to inositol hexakisphosphate (IP6), which allows the assembly of the polyhedral capsid.</text>
</comment>
<comment type="function">
    <text evidence="3">Spacer peptide: Plays a role in the oligomerization of the Gag polyprotein and in the stabilization of the immature particle. Essential layering element during tube assembly.</text>
</comment>
<comment type="function">
    <molecule>Nucleocapsid protein p12</molecule>
    <text evidence="3 5">Binds strongly to viral nucleic acids and promotes their packaging (By similarity). Plays a role in the maturation-stabilization of the viral dimeric RNA via highly structured zinc-binding motifs (By similarity).</text>
</comment>
<comment type="function">
    <molecule>Protease p15</molecule>
    <text evidence="7">The aspartyl protease that mediates proteolytic cleavages of Gag and Gag-Pol polyproteins during or shortly after the release of the virion from the plasma membrane. Cleavages take place as an ordered, step-wise cascade to yield mature proteins. This process is called maturation. Displays maximal activity during the budding process just prior to particle release from the cell.</text>
</comment>
<comment type="function">
    <molecule>Integrase</molecule>
    <text evidence="4 15">Catalyzes viral DNA integration into the host chromosome, by performing a series of DNA cutting and joining reactions (PubMed:2555556). This recombination event is an essential step in the viral replication cycle (By similarity). Has a strong preference for using the 3'-OH at the viral DNA end as a nucleophile (By similarity).</text>
</comment>
<comment type="catalytic activity">
    <molecule>Reverse transcriptase alpha-subunit</molecule>
    <reaction evidence="8">
        <text>DNA(n) + a 2'-deoxyribonucleoside 5'-triphosphate = DNA(n+1) + diphosphate</text>
        <dbReference type="Rhea" id="RHEA:22508"/>
        <dbReference type="Rhea" id="RHEA-COMP:17339"/>
        <dbReference type="Rhea" id="RHEA-COMP:17340"/>
        <dbReference type="ChEBI" id="CHEBI:33019"/>
        <dbReference type="ChEBI" id="CHEBI:61560"/>
        <dbReference type="ChEBI" id="CHEBI:173112"/>
        <dbReference type="EC" id="2.7.7.49"/>
    </reaction>
</comment>
<comment type="catalytic activity">
    <molecule>Reverse transcriptase alpha-subunit</molecule>
    <reaction evidence="8">
        <text>DNA(n) + a 2'-deoxyribonucleoside 5'-triphosphate = DNA(n+1) + diphosphate</text>
        <dbReference type="Rhea" id="RHEA:22508"/>
        <dbReference type="Rhea" id="RHEA-COMP:17339"/>
        <dbReference type="Rhea" id="RHEA-COMP:17340"/>
        <dbReference type="ChEBI" id="CHEBI:33019"/>
        <dbReference type="ChEBI" id="CHEBI:61560"/>
        <dbReference type="ChEBI" id="CHEBI:173112"/>
        <dbReference type="EC" id="2.7.7.7"/>
    </reaction>
</comment>
<comment type="catalytic activity">
    <molecule>Reverse transcriptase alpha-subunit</molecule>
    <reaction evidence="9">
        <text>Endonucleolytic cleavage to 5'-phosphomonoester.</text>
        <dbReference type="EC" id="3.1.26.4"/>
    </reaction>
</comment>
<comment type="cofactor">
    <molecule>Reverse transcriptase alpha-subunit</molecule>
    <cofactor evidence="1">
        <name>Mg(2+)</name>
        <dbReference type="ChEBI" id="CHEBI:18420"/>
    </cofactor>
    <text evidence="8">The RT polymerase active site binds 2 magnesium ions.</text>
</comment>
<comment type="cofactor">
    <molecule>Gag-Pol polyprotein</molecule>
    <cofactor evidence="1">
        <name>Mg(2+)</name>
        <dbReference type="ChEBI" id="CHEBI:18420"/>
    </cofactor>
    <text evidence="1">Binds 2 magnesium ions for ribonuclease H (RNase H) activity. Substrate-binding is a precondition for magnesium binding.</text>
</comment>
<comment type="cofactor">
    <molecule>Integrase</molecule>
    <cofactor evidence="2">
        <name>Mg(2+)</name>
        <dbReference type="ChEBI" id="CHEBI:18420"/>
    </cofactor>
    <cofactor evidence="4">
        <name>Mn(2+)</name>
        <dbReference type="ChEBI" id="CHEBI:29035"/>
    </cofactor>
    <text evidence="2">Binds 8 Mg(2+) ions per integrase homotetramer. Zn(2+) can also be a cofactor for the nicking activity, but not for the polynucleotidyltransferase activity.</text>
</comment>
<comment type="subunit">
    <molecule>Protease p15</molecule>
    <text evidence="3">Active as a homodimer.</text>
</comment>
<comment type="subunit">
    <molecule>Capsid protein p27, alternate cleaved 1</molecule>
    <text evidence="3">Homodimer. Homomultimer. Homohexamer.</text>
</comment>
<comment type="subunit">
    <molecule>Capsid protein p27, alternate cleaved 2</molecule>
    <text evidence="3">Homodimer. Homomultimer. Homohexamer.</text>
</comment>
<comment type="subunit">
    <molecule>Integrase</molecule>
    <text evidence="17">Homodimer; further associates as a homooctamer.</text>
</comment>
<comment type="subunit">
    <molecule>Reverse transcriptase beta-subunit</molecule>
    <text evidence="4">Heterodimer of alpha and beta subunits. Three forms of RT exist: alpha-alpha (alpha-Pol), beta-beta (beta-Pol), and alpha-beta, with the major form being the heterodimer. Both the polymerase and RNase H active sites are located in the alpha subunit of heterodimeric RT alpha-beta.</text>
</comment>
<comment type="subunit">
    <molecule>Reverse transcriptase alpha-subunit</molecule>
    <text evidence="4">Heterodimer of alpha and beta subunits. Three forms of RT exist: alpha-alpha (alpha-Pol), beta-beta (beta-Pol), and alpha-beta, with the major form being the heterodimer. Both the polymerase and RNase H active sites are located in the alpha subunit of heterodimeric RT alpha-beta.</text>
</comment>
<comment type="subcellular location">
    <molecule>Matrix protein p19</molecule>
    <subcellularLocation>
        <location evidence="4">Virion</location>
    </subcellularLocation>
</comment>
<comment type="subcellular location">
    <molecule>Capsid protein p27, alternate cleaved 1</molecule>
    <subcellularLocation>
        <location evidence="4">Virion</location>
    </subcellularLocation>
</comment>
<comment type="subcellular location">
    <molecule>Capsid protein p27, alternate cleaved 2</molecule>
    <subcellularLocation>
        <location evidence="4">Virion</location>
    </subcellularLocation>
</comment>
<comment type="subcellular location">
    <molecule>Nucleocapsid protein p12</molecule>
    <subcellularLocation>
        <location evidence="4">Virion</location>
    </subcellularLocation>
</comment>
<comment type="alternative products">
    <event type="ribosomal frameshifting"/>
    <isoform>
        <id>Q04095-1</id>
        <name>Gag-Pol polyprotein</name>
        <sequence type="displayed"/>
    </isoform>
    <isoform>
        <id>P0C776-1</id>
        <name>Gag polyprotein</name>
        <sequence type="external"/>
    </isoform>
    <text evidence="16">Translation results in the formation of the Gag polyprotein. Ribosomal frameshifting at the gag/pol genes boundary produces the Gag-Pol polyprotein.</text>
</comment>
<comment type="domain">
    <molecule>Gag-Pol polyprotein</molecule>
    <text evidence="4">Late-budding domains (L domains) are short sequence motifs essential for viral particle release. They can occur individually or in close proximity within structural proteins. They interacts with sorting cellular proteins of the multivesicular body (MVB) pathway. Most of these proteins are class E vacuolar protein sorting factors belonging to ESCRT-I, ESCRT-II or ESCRT-III complexes. P2B contains two L domain: a PPXY motif which probably binds to the WW domains of HECT (homologous to E6-AP C-terminus) E3 ubiquitin ligases and a LYPX(n)L domain which is known to bind the Alix adaptator protein.</text>
</comment>
<comment type="domain">
    <molecule>Integrase</molecule>
    <text evidence="4">The core domain contains the D-x(n)-D-x(35)-E motif, named for the phylogenetically conserved glutamic acid and aspartic acid residues and the invariant 35 amino acid spacing between the second and third acidic residues. Each acidic residue of the D,D(35)E motif is independently essential for the 3'-processing and strand transfer activities of purified integrase protein.</text>
</comment>
<comment type="domain">
    <molecule>Gag-Pol polyprotein</molecule>
    <text evidence="3">Contains a nuclear export signal in p10 and a nucleolar localization signal in nucleocapsid protein p12.</text>
</comment>
<comment type="domain">
    <text evidence="3">Capsid protein p27: Proton-driven dimerization of the C-terminus facilitates capsid assembly.</text>
</comment>
<comment type="PTM">
    <molecule>Isoform Gag-Pol polyprotein</molecule>
    <text evidence="4">Specific enzymatic cleavages in vivo yield mature proteins.</text>
</comment>
<comment type="PTM">
    <text evidence="3">Capsid protein p27: The cleavage at the C-terminus is slowly trimmed by the viral protease, sometimes being cut internally thereby generating the short version of the capsid protein and a capsid protein C-terminally extended by 3 amino acids in a ratio of 2:1.</text>
</comment>
<comment type="miscellaneous">
    <text evidence="8">Reverse transcriptase: Error-prone enzyme that lacks a proof-reading function. High mutations rate is a direct consequence of this characteristic. RT also displays frequent template switching leading to high recombination rate. Recombination mostly occurs between homologous regions of the two copackaged RNA genomes. If these two RNA molecules derive from different viral strains, reverse transcription will give rise to highly recombinated proviral DNAs.</text>
</comment>
<comment type="miscellaneous">
    <molecule>Isoform Gag-Pol polyprotein</molecule>
    <text evidence="16">Produced by -1 ribosomal frameshifting.</text>
</comment>
<keyword id="KW-0064">Aspartyl protease</keyword>
<keyword id="KW-0229">DNA integration</keyword>
<keyword id="KW-0233">DNA recombination</keyword>
<keyword id="KW-0238">DNA-binding</keyword>
<keyword id="KW-0239">DNA-directed DNA polymerase</keyword>
<keyword id="KW-0255">Endonuclease</keyword>
<keyword id="KW-0378">Hydrolase</keyword>
<keyword id="KW-0460">Magnesium</keyword>
<keyword id="KW-0479">Metal-binding</keyword>
<keyword id="KW-0511">Multifunctional enzyme</keyword>
<keyword id="KW-0540">Nuclease</keyword>
<keyword id="KW-0548">Nucleotidyltransferase</keyword>
<keyword id="KW-0645">Protease</keyword>
<keyword id="KW-1185">Reference proteome</keyword>
<keyword id="KW-0677">Repeat</keyword>
<keyword id="KW-0688">Ribosomal frameshifting</keyword>
<keyword id="KW-0694">RNA-binding</keyword>
<keyword id="KW-0695">RNA-directed DNA polymerase</keyword>
<keyword id="KW-0808">Transferase</keyword>
<keyword id="KW-1179">Viral genome integration</keyword>
<keyword id="KW-0946">Virion</keyword>
<keyword id="KW-1160">Virus entry into host cell</keyword>
<keyword id="KW-0862">Zinc</keyword>
<keyword id="KW-0863">Zinc-finger</keyword>
<reference key="1">
    <citation type="journal article" date="1992" name="Nucleic Acids Res.">
        <title>Complete nucleotide sequence of a highly infectious avian leukosis virus.</title>
        <authorList>
            <person name="Bieth E."/>
            <person name="Darlix J.L."/>
        </authorList>
    </citation>
    <scope>NUCLEOTIDE SEQUENCE [GENOMIC RNA]</scope>
</reference>
<reference key="2">
    <citation type="journal article" date="1989" name="J. Virol.">
        <title>The avian retroviral integration protein cleaves the terminal sequences of linear viral DNA at the in vivo sites of integration.</title>
        <authorList>
            <person name="Katzman M."/>
            <person name="Katz R.A."/>
            <person name="Skalka A.M."/>
            <person name="Leis J."/>
        </authorList>
    </citation>
    <scope>FUNCTION (INTEGRASE)</scope>
</reference>
<reference key="3">
    <citation type="journal article" date="1995" name="FEBS Lett.">
        <title>Ribosomal frameshifting at the Gag-Pol junction in avian leukemia sarcoma virus forms a novel cleavage site.</title>
        <authorList>
            <person name="Arad G."/>
            <person name="Bar-Meir R."/>
            <person name="Kotler M."/>
        </authorList>
    </citation>
    <scope>RIBOSOMAL FRAMESHIFT</scope>
</reference>
<reference key="4">
    <citation type="journal article" date="2017" name="Curr. Opin. Struct. Biol.">
        <title>Retroviral intasomes arising.</title>
        <authorList>
            <person name="Engelman A.N."/>
            <person name="Cherepanov P."/>
        </authorList>
    </citation>
    <scope>REVIEW (INTEGRASE)</scope>
</reference>
<sequence length="1603" mass="173933">MEAVIKVISSACKTYCGKISPSKKEIGAMLSLLQKEGLLMSPSDLYSPGSWDPITAALSQRAMVLGKSGELKTWGLVLGALKAAREEQVTSEQAKFWLGLGGGRVSPPGPECIEKPATERRIDKGEEVGETTAQRDAKMAPEKMATPKTVGTSCYQCGTATGCNCATASAPPPPYVGSGLYPSLAGVGEQQGQGGDTPWGAEQPRAEPGHAGLAPGPALTDWARIREELASTGPPVVAMPVVIKTEGPAWTPLEPKLITRLADTVRTKGLRSPITMAEVEALMSSPLLPHDVTNLMRVILGPAPYALWMDAWGVQLQTVIAAATRDPRHPANGQGRGERTNLDRLKGLADGMVGNPQGQAALLRPGELVAITASALQAFREVARLAEPAGPWADITQGPSESFVDFANRLIKAVEGSDLPPSARAPVIIDCFRQKSQPDIQQLIRAAPSTLTTPGEIIKYVLDRQKIAPLTDQGIAAAMSSAIQPLVMAVVNRERDGQTGSGGRARGLCYTCGSPGHYQAQCPKKRKSGNSRERCQLCDGMGHNAKQCRRRDGNQGQRPGKGLSSGSWPVSEQPAVSLAMTMEHKDRPLVRVILTNTGSHPVKQRSVYITALLDSGADITIISEEDWPTDWPVMEAANPQIHGIGGGIPMRKSRDMIEVGVINRDGSLERPLLLFPAVAMVRGSILGRDCLQGLGLRLTNLIGRATVLTVALHLAIPLKWKPDHTPVWIDQWPLPEGKLVALTQLVEKELQLGHIEPSLSCWNTPVFVIRKASGSYRLLHDLRAVNAKLVPFGAVQQGAPVLSALPRGWPLMVLDLKDCFFSIPLAEQDREAFAFTLPSVNNQAPARRFQWKVLPQGMTCSPTICQLVVGQVLEPLRLKHPSLRMLHYMDDLLLAASSHDGLEAAGEEVISTLERAGFTISPDKIQREPGVQYLGYKLGSTYVAPVGLVAEPRIATLWDVQKLVGSLQWLRPALGIPPRLMGPFYEQLRGSDPNEAREWNLDMKMAWREIVQLSTTAALERWDPALPLEGAVARCEQGAIGVLGQGLSTHPRPCLWLFSTQPTKAFTAWLEVLTLLITKLRASAVRTFGKEVDILLLPACFREDLPLPEGILLALRGFAGKIRSSDTPSIFDIARPLHVSLKVRVTDHPVPGPTAFTDASSSTHKGVVVWREGPRWEIKEIADLGASVQQLEARAVAMALLLWPTTPTNVVTDSAFVAKMLLKMGQEGVPSTAAAFILEDALSQRSAMAAVLHVRSHSEVPGFFTEGNDVADSQATFQAYPLREAKDLHTALHIGPRALSKACNISMQQAREVVQTCPHCNSAPALEAGVNPRGLGPLQIWQTDFTLEPRMAPRSWLAVTVDTASSAIVVTQHGRVTSVAAQHHWATAIAVLGRPKAIKTDNGSCFTSKSTREWLARWGIAHTTGIPGNSQGQAMVERANRLLKDKIRVLAEGDGFMKRIPTSKQGELLAKAMYALNHFERGENTKTPIQKHWRPTVLTEGPPVKIRIETGEWEKGWNVLVWGRGYAAVKNRDTDKVIWVPSRKVKPDVTQKDEVTKKDEASPLFAGISDWIPWEDEQEGLQGETASNKQERPGEDTLAANES</sequence>
<evidence type="ECO:0000250" key="1"/>
<evidence type="ECO:0000250" key="2">
    <source>
        <dbReference type="UniProtKB" id="O92956"/>
    </source>
</evidence>
<evidence type="ECO:0000250" key="3">
    <source>
        <dbReference type="UniProtKB" id="P03322"/>
    </source>
</evidence>
<evidence type="ECO:0000250" key="4">
    <source>
        <dbReference type="UniProtKB" id="P03354"/>
    </source>
</evidence>
<evidence type="ECO:0000250" key="5">
    <source>
        <dbReference type="UniProtKB" id="P0C776"/>
    </source>
</evidence>
<evidence type="ECO:0000255" key="6">
    <source>
        <dbReference type="PROSITE-ProRule" id="PRU00047"/>
    </source>
</evidence>
<evidence type="ECO:0000255" key="7">
    <source>
        <dbReference type="PROSITE-ProRule" id="PRU00275"/>
    </source>
</evidence>
<evidence type="ECO:0000255" key="8">
    <source>
        <dbReference type="PROSITE-ProRule" id="PRU00405"/>
    </source>
</evidence>
<evidence type="ECO:0000255" key="9">
    <source>
        <dbReference type="PROSITE-ProRule" id="PRU00408"/>
    </source>
</evidence>
<evidence type="ECO:0000255" key="10">
    <source>
        <dbReference type="PROSITE-ProRule" id="PRU00450"/>
    </source>
</evidence>
<evidence type="ECO:0000255" key="11">
    <source>
        <dbReference type="PROSITE-ProRule" id="PRU00457"/>
    </source>
</evidence>
<evidence type="ECO:0000255" key="12">
    <source>
        <dbReference type="PROSITE-ProRule" id="PRU00506"/>
    </source>
</evidence>
<evidence type="ECO:0000255" key="13">
    <source>
        <dbReference type="PROSITE-ProRule" id="PRU10094"/>
    </source>
</evidence>
<evidence type="ECO:0000256" key="14">
    <source>
        <dbReference type="SAM" id="MobiDB-lite"/>
    </source>
</evidence>
<evidence type="ECO:0000269" key="15">
    <source>
    </source>
</evidence>
<evidence type="ECO:0000269" key="16">
    <source>
    </source>
</evidence>
<evidence type="ECO:0000303" key="17">
    <source>
    </source>
</evidence>
<evidence type="ECO:0000305" key="18"/>
<evidence type="ECO:0000305" key="19">
    <source>
    </source>
</evidence>
<feature type="chain" id="PRO_0000442478" description="Gag-Pol polyprotein">
    <location>
        <begin position="1"/>
        <end position="1603"/>
    </location>
</feature>
<feature type="chain" id="PRO_0000397048" description="Matrix protein p19">
    <location>
        <begin position="1"/>
        <end position="155"/>
    </location>
</feature>
<feature type="chain" id="PRO_0000397049" description="p2A">
    <location>
        <begin position="156"/>
        <end position="166"/>
    </location>
</feature>
<feature type="chain" id="PRO_0000397050" description="p2B">
    <location>
        <begin position="167"/>
        <end position="177"/>
    </location>
</feature>
<feature type="chain" id="PRO_0000397051" description="p10">
    <location>
        <begin position="178"/>
        <end position="239"/>
    </location>
</feature>
<feature type="chain" id="PRO_0000397052" description="Capsid protein p27, alternate cleaved 2">
    <location>
        <begin position="240"/>
        <end position="479"/>
    </location>
</feature>
<feature type="chain" id="PRO_0000442479" description="Capsid protein p27, alternate cleaved 1">
    <location>
        <begin position="240"/>
        <end position="476"/>
    </location>
</feature>
<feature type="chain" id="PRO_0000397053" description="Spacer peptide">
    <location>
        <begin position="480"/>
        <end position="488"/>
    </location>
</feature>
<feature type="chain" id="PRO_0000397054" description="Nucleocapsid protein p12">
    <location>
        <begin position="489"/>
        <end position="577"/>
    </location>
</feature>
<feature type="chain" id="PRO_0000397055" description="Protease p15">
    <location>
        <begin position="578"/>
        <end position="708"/>
    </location>
</feature>
<feature type="chain" id="PRO_0000397056" description="Reverse transcriptase beta-subunit">
    <location>
        <begin position="709"/>
        <end position="1567"/>
    </location>
</feature>
<feature type="chain" id="PRO_0000040982" description="Reverse transcriptase alpha-subunit">
    <location>
        <begin position="709"/>
        <end position="1280"/>
    </location>
</feature>
<feature type="chain" id="PRO_0000040983" description="Integrase">
    <location>
        <begin position="1281"/>
        <end position="1567"/>
    </location>
</feature>
<feature type="chain" id="PRO_0000397057" description="p4">
    <location>
        <begin position="1568"/>
        <end position="1603"/>
    </location>
</feature>
<feature type="domain" description="Peptidase A2" evidence="7">
    <location>
        <begin position="609"/>
        <end position="690"/>
    </location>
</feature>
<feature type="domain" description="Reverse transcriptase" evidence="8">
    <location>
        <begin position="750"/>
        <end position="938"/>
    </location>
</feature>
<feature type="domain" description="RNase H type-1" evidence="9">
    <location>
        <begin position="1149"/>
        <end position="1280"/>
    </location>
</feature>
<feature type="domain" description="Integrase catalytic" evidence="11">
    <location>
        <begin position="1333"/>
        <end position="1496"/>
    </location>
</feature>
<feature type="zinc finger region" description="CCHC-type 1" evidence="6">
    <location>
        <begin position="507"/>
        <end position="524"/>
    </location>
</feature>
<feature type="zinc finger region" description="CCHC-type 2" evidence="6">
    <location>
        <begin position="533"/>
        <end position="550"/>
    </location>
</feature>
<feature type="zinc finger region" description="Integrase-type" evidence="10">
    <location>
        <begin position="1280"/>
        <end position="1321"/>
    </location>
</feature>
<feature type="DNA-binding region" description="Integrase-type" evidence="12">
    <location>
        <begin position="1502"/>
        <end position="1550"/>
    </location>
</feature>
<feature type="region of interest" description="Disordered" evidence="14">
    <location>
        <begin position="124"/>
        <end position="144"/>
    </location>
</feature>
<feature type="region of interest" description="Disordered" evidence="14">
    <location>
        <begin position="544"/>
        <end position="571"/>
    </location>
</feature>
<feature type="region of interest" description="Involved in homooctamerization" evidence="4">
    <location>
        <begin position="1548"/>
        <end position="1567"/>
    </location>
</feature>
<feature type="region of interest" description="Disordered" evidence="14">
    <location>
        <begin position="1566"/>
        <end position="1603"/>
    </location>
</feature>
<feature type="short sequence motif" description="PPXY motif">
    <location>
        <begin position="172"/>
        <end position="175"/>
    </location>
</feature>
<feature type="short sequence motif" description="LYPX(n)L motif" evidence="3">
    <location>
        <begin position="180"/>
        <end position="184"/>
    </location>
</feature>
<feature type="short sequence motif" description="Nuclear export signal" evidence="3">
    <location>
        <begin position="219"/>
        <end position="229"/>
    </location>
</feature>
<feature type="compositionally biased region" description="Basic and acidic residues" evidence="14">
    <location>
        <begin position="124"/>
        <end position="141"/>
    </location>
</feature>
<feature type="active site" description="For protease activity; shared with dimeric partner" evidence="13">
    <location>
        <position position="614"/>
    </location>
</feature>
<feature type="binding site" evidence="8">
    <location>
        <position position="815"/>
    </location>
    <ligand>
        <name>Mg(2+)</name>
        <dbReference type="ChEBI" id="CHEBI:18420"/>
        <label>1</label>
        <note>catalytic; for reverse transcriptase activity</note>
    </ligand>
</feature>
<feature type="binding site" evidence="8">
    <location>
        <position position="890"/>
    </location>
    <ligand>
        <name>Mg(2+)</name>
        <dbReference type="ChEBI" id="CHEBI:18420"/>
        <label>1</label>
        <note>catalytic; for reverse transcriptase activity</note>
    </ligand>
</feature>
<feature type="binding site" evidence="8">
    <location>
        <position position="891"/>
    </location>
    <ligand>
        <name>Mg(2+)</name>
        <dbReference type="ChEBI" id="CHEBI:18420"/>
        <label>1</label>
        <note>catalytic; for reverse transcriptase activity</note>
    </ligand>
</feature>
<feature type="binding site" evidence="18">
    <location>
        <position position="1158"/>
    </location>
    <ligand>
        <name>Mg(2+)</name>
        <dbReference type="ChEBI" id="CHEBI:18420"/>
        <label>2</label>
        <note>catalytic; for RNase H activity</note>
    </ligand>
</feature>
<feature type="binding site" evidence="18">
    <location>
        <position position="1192"/>
    </location>
    <ligand>
        <name>Mg(2+)</name>
        <dbReference type="ChEBI" id="CHEBI:18420"/>
        <label>2</label>
        <note>catalytic; for RNase H activity</note>
    </ligand>
</feature>
<feature type="binding site" evidence="18">
    <location>
        <position position="1213"/>
    </location>
    <ligand>
        <name>Mg(2+)</name>
        <dbReference type="ChEBI" id="CHEBI:18420"/>
        <label>2</label>
        <note>catalytic; for RNase H activity</note>
    </ligand>
</feature>
<feature type="binding site" evidence="18">
    <location>
        <position position="1272"/>
    </location>
    <ligand>
        <name>Mg(2+)</name>
        <dbReference type="ChEBI" id="CHEBI:18420"/>
        <label>2</label>
        <note>catalytic; for RNase H activity</note>
    </ligand>
</feature>
<feature type="binding site" evidence="10">
    <location>
        <position position="1289"/>
    </location>
    <ligand>
        <name>Zn(2+)</name>
        <dbReference type="ChEBI" id="CHEBI:29105"/>
    </ligand>
</feature>
<feature type="binding site" evidence="10">
    <location>
        <position position="1293"/>
    </location>
    <ligand>
        <name>Zn(2+)</name>
        <dbReference type="ChEBI" id="CHEBI:29105"/>
    </ligand>
</feature>
<feature type="binding site" evidence="10">
    <location>
        <position position="1317"/>
    </location>
    <ligand>
        <name>Zn(2+)</name>
        <dbReference type="ChEBI" id="CHEBI:29105"/>
    </ligand>
</feature>
<feature type="binding site" evidence="10">
    <location>
        <position position="1320"/>
    </location>
    <ligand>
        <name>Zn(2+)</name>
        <dbReference type="ChEBI" id="CHEBI:29105"/>
    </ligand>
</feature>
<feature type="binding site" evidence="8">
    <location>
        <position position="1344"/>
    </location>
    <ligand>
        <name>Mg(2+)</name>
        <dbReference type="ChEBI" id="CHEBI:18420"/>
        <label>3</label>
        <note>catalytic; for integrase activity</note>
    </ligand>
</feature>
<feature type="binding site" evidence="8">
    <location>
        <position position="1401"/>
    </location>
    <ligand>
        <name>Mg(2+)</name>
        <dbReference type="ChEBI" id="CHEBI:18420"/>
        <label>3</label>
        <note>catalytic; for integrase activity</note>
    </ligand>
</feature>
<feature type="binding site" evidence="4">
    <location>
        <position position="1437"/>
    </location>
    <ligand>
        <name>Mg(2+)</name>
        <dbReference type="ChEBI" id="CHEBI:18420"/>
        <label>3</label>
        <note>catalytic; for integrase activity</note>
    </ligand>
</feature>
<feature type="site" description="Cleavage; by viral protease p15" evidence="3">
    <location>
        <begin position="155"/>
        <end position="156"/>
    </location>
</feature>
<feature type="site" description="Cleavage; by viral protease p15" evidence="3">
    <location>
        <begin position="166"/>
        <end position="167"/>
    </location>
</feature>
<feature type="site" description="Cleavage; by viral protease p15" evidence="3">
    <location>
        <begin position="177"/>
        <end position="178"/>
    </location>
</feature>
<feature type="site" description="Cleavage; by viral protease p15" evidence="3">
    <location>
        <begin position="239"/>
        <end position="240"/>
    </location>
</feature>
<feature type="site" description="Involved in capsid protein dimerization upon acidification" evidence="3">
    <location>
        <position position="418"/>
    </location>
</feature>
<feature type="site" description="Involved in capsid protein dimerization upon acidification" evidence="3">
    <location>
        <position position="430"/>
    </location>
</feature>
<feature type="site" description="Cleavage; by viral protease p15" evidence="3">
    <location>
        <begin position="476"/>
        <end position="477"/>
    </location>
</feature>
<feature type="site" description="Cleavage; by viral protease p15" evidence="3">
    <location>
        <begin position="479"/>
        <end position="480"/>
    </location>
</feature>
<feature type="site" description="Cleavage; by viral protease p15" evidence="3">
    <location>
        <begin position="488"/>
        <end position="489"/>
    </location>
</feature>
<feature type="site" description="Cleavage; by viral protease p15" evidence="3">
    <location>
        <begin position="577"/>
        <end position="578"/>
    </location>
</feature>
<feature type="site" description="Cleavage; by viral protease p15" evidence="4">
    <location>
        <begin position="708"/>
        <end position="709"/>
    </location>
</feature>
<feature type="site" description="Cleavage; by viral protease p15" evidence="4">
    <location>
        <begin position="1280"/>
        <end position="1281"/>
    </location>
</feature>
<feature type="site" description="Cleavage; by viral protease p15" evidence="1">
    <location>
        <begin position="1567"/>
        <end position="1568"/>
    </location>
</feature>